<gene>
    <name type="ordered locus">EF_2458</name>
</gene>
<dbReference type="EMBL" id="AE016830">
    <property type="protein sequence ID" value="AAO82176.1"/>
    <property type="molecule type" value="Genomic_DNA"/>
</dbReference>
<dbReference type="RefSeq" id="NP_816106.1">
    <property type="nucleotide sequence ID" value="NC_004668.1"/>
</dbReference>
<dbReference type="RefSeq" id="WP_002356684.1">
    <property type="nucleotide sequence ID" value="NZ_KE136528.1"/>
</dbReference>
<dbReference type="PDB" id="2GBO">
    <property type="method" value="X-ray"/>
    <property type="resolution" value="2.20 A"/>
    <property type="chains" value="A/B=1-101"/>
</dbReference>
<dbReference type="PDBsum" id="2GBO"/>
<dbReference type="SMR" id="Q831P3"/>
<dbReference type="STRING" id="226185.EF_2458"/>
<dbReference type="EnsemblBacteria" id="AAO82176">
    <property type="protein sequence ID" value="AAO82176"/>
    <property type="gene ID" value="EF_2458"/>
</dbReference>
<dbReference type="KEGG" id="efa:EF2458"/>
<dbReference type="PATRIC" id="fig|226185.45.peg.1087"/>
<dbReference type="eggNOG" id="COG4838">
    <property type="taxonomic scope" value="Bacteria"/>
</dbReference>
<dbReference type="HOGENOM" id="CLU_160493_1_0_9"/>
<dbReference type="EvolutionaryTrace" id="Q831P3"/>
<dbReference type="Proteomes" id="UP000001415">
    <property type="component" value="Chromosome"/>
</dbReference>
<dbReference type="Gene3D" id="1.10.287.750">
    <property type="entry name" value="SO2669-like"/>
    <property type="match status" value="1"/>
</dbReference>
<dbReference type="HAMAP" id="MF_01560">
    <property type="entry name" value="UPF0358"/>
    <property type="match status" value="1"/>
</dbReference>
<dbReference type="InterPro" id="IPR009983">
    <property type="entry name" value="UPF0358"/>
</dbReference>
<dbReference type="InterPro" id="IPR036270">
    <property type="entry name" value="UPF0358_sf"/>
</dbReference>
<dbReference type="NCBIfam" id="NF010187">
    <property type="entry name" value="PRK13666.1"/>
    <property type="match status" value="1"/>
</dbReference>
<dbReference type="Pfam" id="PF07408">
    <property type="entry name" value="DUF1507"/>
    <property type="match status" value="1"/>
</dbReference>
<dbReference type="SUPFAM" id="SSF140404">
    <property type="entry name" value="EF2458-like"/>
    <property type="match status" value="1"/>
</dbReference>
<feature type="chain" id="PRO_0000110644" description="UPF0358 protein EF_2458">
    <location>
        <begin position="1"/>
        <end position="101"/>
    </location>
</feature>
<feature type="helix" evidence="2">
    <location>
        <begin position="4"/>
        <end position="29"/>
    </location>
</feature>
<feature type="helix" evidence="2">
    <location>
        <begin position="33"/>
        <end position="60"/>
    </location>
</feature>
<feature type="helix" evidence="2">
    <location>
        <begin position="66"/>
        <end position="80"/>
    </location>
</feature>
<reference key="1">
    <citation type="journal article" date="2003" name="Science">
        <title>Role of mobile DNA in the evolution of vancomycin-resistant Enterococcus faecalis.</title>
        <authorList>
            <person name="Paulsen I.T."/>
            <person name="Banerjei L."/>
            <person name="Myers G.S.A."/>
            <person name="Nelson K.E."/>
            <person name="Seshadri R."/>
            <person name="Read T.D."/>
            <person name="Fouts D.E."/>
            <person name="Eisen J.A."/>
            <person name="Gill S.R."/>
            <person name="Heidelberg J.F."/>
            <person name="Tettelin H."/>
            <person name="Dodson R.J."/>
            <person name="Umayam L.A."/>
            <person name="Brinkac L.M."/>
            <person name="Beanan M.J."/>
            <person name="Daugherty S.C."/>
            <person name="DeBoy R.T."/>
            <person name="Durkin S.A."/>
            <person name="Kolonay J.F."/>
            <person name="Madupu R."/>
            <person name="Nelson W.C."/>
            <person name="Vamathevan J.J."/>
            <person name="Tran B."/>
            <person name="Upton J."/>
            <person name="Hansen T."/>
            <person name="Shetty J."/>
            <person name="Khouri H.M."/>
            <person name="Utterback T.R."/>
            <person name="Radune D."/>
            <person name="Ketchum K.A."/>
            <person name="Dougherty B.A."/>
            <person name="Fraser C.M."/>
        </authorList>
    </citation>
    <scope>NUCLEOTIDE SEQUENCE [LARGE SCALE GENOMIC DNA]</scope>
    <source>
        <strain>ATCC 700802 / V583</strain>
    </source>
</reference>
<reference key="2">
    <citation type="submission" date="2006-04" db="PDB data bank">
        <title>X-ray crystal structure of conserved hypothetical protein EF_2458 from Enterococcus faecalis.</title>
        <authorList>
            <consortium name="Midwest center for structural genomics (MCSG)"/>
        </authorList>
    </citation>
    <scope>X-RAY CRYSTALLOGRAPHY (2.2 ANGSTROMS)</scope>
</reference>
<protein>
    <recommendedName>
        <fullName evidence="1">UPF0358 protein EF_2458</fullName>
    </recommendedName>
</protein>
<comment type="similarity">
    <text evidence="1">Belongs to the UPF0358 family.</text>
</comment>
<evidence type="ECO:0000255" key="1">
    <source>
        <dbReference type="HAMAP-Rule" id="MF_01560"/>
    </source>
</evidence>
<evidence type="ECO:0007829" key="2">
    <source>
        <dbReference type="PDB" id="2GBO"/>
    </source>
</evidence>
<keyword id="KW-0002">3D-structure</keyword>
<keyword id="KW-1185">Reference proteome</keyword>
<accession>Q831P3</accession>
<sequence>MDEGISKKFAIQLLEDDAERIKMLIRNQKNSLCISQCKAFEEVVDTQMYGFSRQVTYATRLGILTNDEGHRLLSDLERELNQLYTDVYEETQEKNEIGKEG</sequence>
<name>Y2458_ENTFA</name>
<proteinExistence type="evidence at protein level"/>
<organism>
    <name type="scientific">Enterococcus faecalis (strain ATCC 700802 / V583)</name>
    <dbReference type="NCBI Taxonomy" id="226185"/>
    <lineage>
        <taxon>Bacteria</taxon>
        <taxon>Bacillati</taxon>
        <taxon>Bacillota</taxon>
        <taxon>Bacilli</taxon>
        <taxon>Lactobacillales</taxon>
        <taxon>Enterococcaceae</taxon>
        <taxon>Enterococcus</taxon>
    </lineage>
</organism>